<keyword id="KW-1003">Cell membrane</keyword>
<keyword id="KW-0413">Isomerase</keyword>
<keyword id="KW-0449">Lipoprotein</keyword>
<keyword id="KW-0472">Membrane</keyword>
<keyword id="KW-0564">Palmitate</keyword>
<keyword id="KW-0697">Rotamase</keyword>
<keyword id="KW-0732">Signal</keyword>
<name>PRSA_STRA3</name>
<reference key="1">
    <citation type="journal article" date="2002" name="Mol. Microbiol.">
        <title>Genome sequence of Streptococcus agalactiae, a pathogen causing invasive neonatal disease.</title>
        <authorList>
            <person name="Glaser P."/>
            <person name="Rusniok C."/>
            <person name="Buchrieser C."/>
            <person name="Chevalier F."/>
            <person name="Frangeul L."/>
            <person name="Msadek T."/>
            <person name="Zouine M."/>
            <person name="Couve E."/>
            <person name="Lalioui L."/>
            <person name="Poyart C."/>
            <person name="Trieu-Cuot P."/>
            <person name="Kunst F."/>
        </authorList>
    </citation>
    <scope>NUCLEOTIDE SEQUENCE [LARGE SCALE GENOMIC DNA]</scope>
    <source>
        <strain>NEM316</strain>
    </source>
</reference>
<gene>
    <name evidence="1" type="primary">prsA</name>
    <name type="ordered locus">gbs0827</name>
</gene>
<evidence type="ECO:0000255" key="1">
    <source>
        <dbReference type="HAMAP-Rule" id="MF_01145"/>
    </source>
</evidence>
<protein>
    <recommendedName>
        <fullName evidence="1">Foldase protein PrsA</fullName>
        <ecNumber evidence="1">5.2.1.8</ecNumber>
    </recommendedName>
</protein>
<dbReference type="EC" id="5.2.1.8" evidence="1"/>
<dbReference type="EMBL" id="AL766847">
    <property type="protein sequence ID" value="CAD46471.1"/>
    <property type="molecule type" value="Genomic_DNA"/>
</dbReference>
<dbReference type="RefSeq" id="WP_000857818.1">
    <property type="nucleotide sequence ID" value="NC_004368.1"/>
</dbReference>
<dbReference type="SMR" id="Q8E602"/>
<dbReference type="GeneID" id="66885758"/>
<dbReference type="KEGG" id="san:gbs0827"/>
<dbReference type="eggNOG" id="COG0760">
    <property type="taxonomic scope" value="Bacteria"/>
</dbReference>
<dbReference type="HOGENOM" id="CLU_034646_6_0_9"/>
<dbReference type="Proteomes" id="UP000000823">
    <property type="component" value="Chromosome"/>
</dbReference>
<dbReference type="GO" id="GO:0005886">
    <property type="term" value="C:plasma membrane"/>
    <property type="evidence" value="ECO:0007669"/>
    <property type="project" value="UniProtKB-SubCell"/>
</dbReference>
<dbReference type="GO" id="GO:0003755">
    <property type="term" value="F:peptidyl-prolyl cis-trans isomerase activity"/>
    <property type="evidence" value="ECO:0007669"/>
    <property type="project" value="UniProtKB-UniRule"/>
</dbReference>
<dbReference type="GO" id="GO:0006457">
    <property type="term" value="P:protein folding"/>
    <property type="evidence" value="ECO:0007669"/>
    <property type="project" value="UniProtKB-UniRule"/>
</dbReference>
<dbReference type="Gene3D" id="3.10.50.40">
    <property type="match status" value="1"/>
</dbReference>
<dbReference type="HAMAP" id="MF_01145">
    <property type="entry name" value="Foldase_PrsA"/>
    <property type="match status" value="1"/>
</dbReference>
<dbReference type="InterPro" id="IPR023059">
    <property type="entry name" value="Foldase_PrsA"/>
</dbReference>
<dbReference type="InterPro" id="IPR046357">
    <property type="entry name" value="PPIase_dom_sf"/>
</dbReference>
<dbReference type="InterPro" id="IPR000297">
    <property type="entry name" value="PPIase_PpiC"/>
</dbReference>
<dbReference type="InterPro" id="IPR050245">
    <property type="entry name" value="PrsA_foldase"/>
</dbReference>
<dbReference type="InterPro" id="IPR027304">
    <property type="entry name" value="Trigger_fact/SurA_dom_sf"/>
</dbReference>
<dbReference type="NCBIfam" id="NF002361">
    <property type="entry name" value="PRK01326.1"/>
    <property type="match status" value="1"/>
</dbReference>
<dbReference type="PANTHER" id="PTHR47245:SF1">
    <property type="entry name" value="FOLDASE PROTEIN PRSA"/>
    <property type="match status" value="1"/>
</dbReference>
<dbReference type="PANTHER" id="PTHR47245">
    <property type="entry name" value="PEPTIDYLPROLYL ISOMERASE"/>
    <property type="match status" value="1"/>
</dbReference>
<dbReference type="Pfam" id="PF13145">
    <property type="entry name" value="Rotamase_2"/>
    <property type="match status" value="1"/>
</dbReference>
<dbReference type="SUPFAM" id="SSF54534">
    <property type="entry name" value="FKBP-like"/>
    <property type="match status" value="1"/>
</dbReference>
<dbReference type="SUPFAM" id="SSF109998">
    <property type="entry name" value="Triger factor/SurA peptide-binding domain-like"/>
    <property type="match status" value="1"/>
</dbReference>
<dbReference type="PROSITE" id="PS50198">
    <property type="entry name" value="PPIC_PPIASE_2"/>
    <property type="match status" value="1"/>
</dbReference>
<dbReference type="PROSITE" id="PS51257">
    <property type="entry name" value="PROKAR_LIPOPROTEIN"/>
    <property type="match status" value="1"/>
</dbReference>
<organism>
    <name type="scientific">Streptococcus agalactiae serotype III (strain NEM316)</name>
    <dbReference type="NCBI Taxonomy" id="211110"/>
    <lineage>
        <taxon>Bacteria</taxon>
        <taxon>Bacillati</taxon>
        <taxon>Bacillota</taxon>
        <taxon>Bacilli</taxon>
        <taxon>Lactobacillales</taxon>
        <taxon>Streptococcaceae</taxon>
        <taxon>Streptococcus</taxon>
    </lineage>
</organism>
<proteinExistence type="inferred from homology"/>
<accession>Q8E602</accession>
<feature type="signal peptide" evidence="1">
    <location>
        <begin position="1"/>
        <end position="22"/>
    </location>
</feature>
<feature type="chain" id="PRO_0000029324" description="Foldase protein PrsA">
    <location>
        <begin position="23"/>
        <end position="309"/>
    </location>
</feature>
<feature type="domain" description="PpiC" evidence="1">
    <location>
        <begin position="146"/>
        <end position="241"/>
    </location>
</feature>
<feature type="lipid moiety-binding region" description="N-palmitoyl cysteine" evidence="1">
    <location>
        <position position="23"/>
    </location>
</feature>
<feature type="lipid moiety-binding region" description="S-diacylglycerol cysteine" evidence="1">
    <location>
        <position position="23"/>
    </location>
</feature>
<sequence>MKTRSKLAAGFLTLMSVATLAACSGKTSNGTNVVTMKGDTITVSDFYDQVKTSKAAQQSMLTLILSRVFDTQYGDKVSDKKVSEAYNKTAKGYGNSFSSALSQAGLTPEGYKQQIRTTMLVEYAVKEAAKKELTEANYKEAYKNYTPETSVQVIKLDAEDKAKSVLKDVKADGADFAKIAKEKTTATDKKVEYKFDSAGTSLPKEVMSAAFKLDKNGVSDVVSTVDSTTYKTSYYIIKVTDKTEKKSDWKSYKNRLKEVILKDKTSDRSFQNKVISKALEKANVKIKDKAFAGILSQYATTSGSSSLKK</sequence>
<comment type="function">
    <text evidence="1">Plays a major role in protein secretion by helping the post-translocational extracellular folding of several secreted proteins.</text>
</comment>
<comment type="catalytic activity">
    <reaction evidence="1">
        <text>[protein]-peptidylproline (omega=180) = [protein]-peptidylproline (omega=0)</text>
        <dbReference type="Rhea" id="RHEA:16237"/>
        <dbReference type="Rhea" id="RHEA-COMP:10747"/>
        <dbReference type="Rhea" id="RHEA-COMP:10748"/>
        <dbReference type="ChEBI" id="CHEBI:83833"/>
        <dbReference type="ChEBI" id="CHEBI:83834"/>
        <dbReference type="EC" id="5.2.1.8"/>
    </reaction>
</comment>
<comment type="subcellular location">
    <subcellularLocation>
        <location evidence="1">Cell membrane</location>
        <topology evidence="1">Lipid-anchor</topology>
    </subcellularLocation>
</comment>
<comment type="similarity">
    <text evidence="1">Belongs to the PrsA family.</text>
</comment>